<feature type="chain" id="PRO_0000412048" description="CASP-like protein 2U6">
    <location>
        <begin position="1"/>
        <end position="203"/>
    </location>
</feature>
<feature type="topological domain" description="Cytoplasmic" evidence="2">
    <location>
        <begin position="1"/>
        <end position="31"/>
    </location>
</feature>
<feature type="transmembrane region" description="Helical" evidence="2">
    <location>
        <begin position="32"/>
        <end position="52"/>
    </location>
</feature>
<feature type="topological domain" description="Extracellular" evidence="2">
    <location>
        <begin position="53"/>
        <end position="84"/>
    </location>
</feature>
<feature type="transmembrane region" description="Helical" evidence="2">
    <location>
        <begin position="85"/>
        <end position="105"/>
    </location>
</feature>
<feature type="topological domain" description="Cytoplasmic" evidence="2">
    <location>
        <begin position="106"/>
        <end position="111"/>
    </location>
</feature>
<feature type="transmembrane region" description="Helical" evidence="2">
    <location>
        <begin position="112"/>
        <end position="132"/>
    </location>
</feature>
<feature type="topological domain" description="Extracellular" evidence="2">
    <location>
        <begin position="133"/>
        <end position="164"/>
    </location>
</feature>
<feature type="transmembrane region" description="Helical" evidence="2">
    <location>
        <begin position="165"/>
        <end position="185"/>
    </location>
</feature>
<feature type="topological domain" description="Cytoplasmic" evidence="2">
    <location>
        <begin position="186"/>
        <end position="203"/>
    </location>
</feature>
<feature type="glycosylation site" description="N-linked (GlcNAc...) asparagine" evidence="2">
    <location>
        <position position="67"/>
    </location>
</feature>
<protein>
    <recommendedName>
        <fullName>CASP-like protein 2U6</fullName>
        <shortName>SmCASPL2U6</shortName>
    </recommendedName>
</protein>
<evidence type="ECO:0000250" key="1"/>
<evidence type="ECO:0000255" key="2"/>
<evidence type="ECO:0000305" key="3"/>
<dbReference type="EMBL" id="GL377665">
    <property type="protein sequence ID" value="EFJ09182.1"/>
    <property type="molecule type" value="Genomic_DNA"/>
</dbReference>
<dbReference type="EMBL" id="FE505095">
    <property type="status" value="NOT_ANNOTATED_CDS"/>
    <property type="molecule type" value="mRNA"/>
</dbReference>
<dbReference type="SMR" id="D8T2C0"/>
<dbReference type="FunCoup" id="D8T2C0">
    <property type="interactions" value="656"/>
</dbReference>
<dbReference type="EnsemblPlants" id="EFJ09182">
    <property type="protein sequence ID" value="EFJ09182"/>
    <property type="gene ID" value="SELMODRAFT_272089"/>
</dbReference>
<dbReference type="Gramene" id="EFJ09182">
    <property type="protein sequence ID" value="EFJ09182"/>
    <property type="gene ID" value="SELMODRAFT_272089"/>
</dbReference>
<dbReference type="KEGG" id="smo:SELMODRAFT_272089"/>
<dbReference type="HOGENOM" id="CLU_066104_0_1_1"/>
<dbReference type="InParanoid" id="D8T2C0"/>
<dbReference type="OMA" id="WAIFSVD"/>
<dbReference type="OrthoDB" id="689701at2759"/>
<dbReference type="Proteomes" id="UP000001514">
    <property type="component" value="Unassembled WGS sequence"/>
</dbReference>
<dbReference type="GO" id="GO:0005886">
    <property type="term" value="C:plasma membrane"/>
    <property type="evidence" value="ECO:0007669"/>
    <property type="project" value="UniProtKB-SubCell"/>
</dbReference>
<dbReference type="InterPro" id="IPR006459">
    <property type="entry name" value="CASP/CASPL"/>
</dbReference>
<dbReference type="InterPro" id="IPR006702">
    <property type="entry name" value="CASP_dom"/>
</dbReference>
<dbReference type="NCBIfam" id="TIGR01569">
    <property type="entry name" value="A_tha_TIGR01569"/>
    <property type="match status" value="1"/>
</dbReference>
<dbReference type="PANTHER" id="PTHR33573:SF30">
    <property type="entry name" value="CASP-LIKE PROTEIN 2C1-RELATED"/>
    <property type="match status" value="1"/>
</dbReference>
<dbReference type="PANTHER" id="PTHR33573">
    <property type="entry name" value="CASP-LIKE PROTEIN 4A4"/>
    <property type="match status" value="1"/>
</dbReference>
<dbReference type="Pfam" id="PF04535">
    <property type="entry name" value="CASP_dom"/>
    <property type="match status" value="1"/>
</dbReference>
<accession>D8T2C0</accession>
<keyword id="KW-1003">Cell membrane</keyword>
<keyword id="KW-0325">Glycoprotein</keyword>
<keyword id="KW-0472">Membrane</keyword>
<keyword id="KW-1185">Reference proteome</keyword>
<keyword id="KW-0812">Transmembrane</keyword>
<keyword id="KW-1133">Transmembrane helix</keyword>
<gene>
    <name type="ORF">SELMODRAFT_272089</name>
</gene>
<sequence>MSEHRIPVAADKKISPPISAGEQKGCKGLKRTDLMLRFAAFVCCTVTMVVLITDKQTSAIQVPGFNNLTITKTVSFDLAKAFVYLVSAAGIGAGYTLLVLVLSIISAERSKAIAWFIFVFDQLITYVLLAAAAASTEVAYMGAHAPPEASWLKVCSLFGRFCHQLGASLVTSLISTVLFAFSAAISAYYLFSNTNVRPAYSKG</sequence>
<reference key="1">
    <citation type="journal article" date="2011" name="Science">
        <title>The Selaginella genome identifies genetic changes associated with the evolution of vascular plants.</title>
        <authorList>
            <person name="Banks J.A."/>
            <person name="Nishiyama T."/>
            <person name="Hasebe M."/>
            <person name="Bowman J.L."/>
            <person name="Gribskov M."/>
            <person name="dePamphilis C."/>
            <person name="Albert V.A."/>
            <person name="Aono N."/>
            <person name="Aoyama T."/>
            <person name="Ambrose B.A."/>
            <person name="Ashton N.W."/>
            <person name="Axtell M.J."/>
            <person name="Barker E."/>
            <person name="Barker M.S."/>
            <person name="Bennetzen J.L."/>
            <person name="Bonawitz N.D."/>
            <person name="Chapple C."/>
            <person name="Cheng C."/>
            <person name="Correa L.G."/>
            <person name="Dacre M."/>
            <person name="DeBarry J."/>
            <person name="Dreyer I."/>
            <person name="Elias M."/>
            <person name="Engstrom E.M."/>
            <person name="Estelle M."/>
            <person name="Feng L."/>
            <person name="Finet C."/>
            <person name="Floyd S.K."/>
            <person name="Frommer W.B."/>
            <person name="Fujita T."/>
            <person name="Gramzow L."/>
            <person name="Gutensohn M."/>
            <person name="Harholt J."/>
            <person name="Hattori M."/>
            <person name="Heyl A."/>
            <person name="Hirai T."/>
            <person name="Hiwatashi Y."/>
            <person name="Ishikawa M."/>
            <person name="Iwata M."/>
            <person name="Karol K.G."/>
            <person name="Koehler B."/>
            <person name="Kolukisaoglu U."/>
            <person name="Kubo M."/>
            <person name="Kurata T."/>
            <person name="Lalonde S."/>
            <person name="Li K."/>
            <person name="Li Y."/>
            <person name="Litt A."/>
            <person name="Lyons E."/>
            <person name="Manning G."/>
            <person name="Maruyama T."/>
            <person name="Michael T.P."/>
            <person name="Mikami K."/>
            <person name="Miyazaki S."/>
            <person name="Morinaga S."/>
            <person name="Murata T."/>
            <person name="Mueller-Roeber B."/>
            <person name="Nelson D.R."/>
            <person name="Obara M."/>
            <person name="Oguri Y."/>
            <person name="Olmstead R.G."/>
            <person name="Onodera N."/>
            <person name="Petersen B.L."/>
            <person name="Pils B."/>
            <person name="Prigge M."/>
            <person name="Rensing S.A."/>
            <person name="Riano-Pachon D.M."/>
            <person name="Roberts A.W."/>
            <person name="Sato Y."/>
            <person name="Scheller H.V."/>
            <person name="Schulz B."/>
            <person name="Schulz C."/>
            <person name="Shakirov E.V."/>
            <person name="Shibagaki N."/>
            <person name="Shinohara N."/>
            <person name="Shippen D.E."/>
            <person name="Soerensen I."/>
            <person name="Sotooka R."/>
            <person name="Sugimoto N."/>
            <person name="Sugita M."/>
            <person name="Sumikawa N."/>
            <person name="Tanurdzic M."/>
            <person name="Theissen G."/>
            <person name="Ulvskov P."/>
            <person name="Wakazuki S."/>
            <person name="Weng J.K."/>
            <person name="Willats W.W."/>
            <person name="Wipf D."/>
            <person name="Wolf P.G."/>
            <person name="Yang L."/>
            <person name="Zimmer A.D."/>
            <person name="Zhu Q."/>
            <person name="Mitros T."/>
            <person name="Hellsten U."/>
            <person name="Loque D."/>
            <person name="Otillar R."/>
            <person name="Salamov A."/>
            <person name="Schmutz J."/>
            <person name="Shapiro H."/>
            <person name="Lindquist E."/>
            <person name="Lucas S."/>
            <person name="Rokhsar D."/>
            <person name="Grigoriev I.V."/>
        </authorList>
    </citation>
    <scope>NUCLEOTIDE SEQUENCE [LARGE SCALE GENOMIC DNA]</scope>
</reference>
<reference key="2">
    <citation type="submission" date="2008-03" db="EMBL/GenBank/DDBJ databases">
        <title>DOE Joint Genome Institute Selaginella moellendorffii EST project.</title>
        <authorList>
            <person name="Richardson P."/>
            <person name="Lucas S."/>
            <person name="Rokhsar D."/>
            <person name="Wang M."/>
            <person name="Lindquist E.A."/>
        </authorList>
    </citation>
    <scope>NUCLEOTIDE SEQUENCE [LARGE SCALE MRNA]</scope>
</reference>
<reference key="3">
    <citation type="journal article" date="2014" name="Plant Physiol.">
        <title>Functional and evolutionary analysis of the CASPARIAN STRIP MEMBRANE DOMAIN PROTEIN family.</title>
        <authorList>
            <person name="Roppolo D."/>
            <person name="Boeckmann B."/>
            <person name="Pfister A."/>
            <person name="Boutet E."/>
            <person name="Rubio M.C."/>
            <person name="Denervaud-Tendon V."/>
            <person name="Vermeer J.E."/>
            <person name="Gheyselinck J."/>
            <person name="Xenarios I."/>
            <person name="Geldner N."/>
        </authorList>
    </citation>
    <scope>GENE FAMILY</scope>
    <scope>NOMENCLATURE</scope>
</reference>
<name>CSPL1_SELML</name>
<comment type="subunit">
    <text evidence="1">Homodimer and heterodimers.</text>
</comment>
<comment type="subcellular location">
    <subcellularLocation>
        <location evidence="1">Cell membrane</location>
        <topology evidence="1">Multi-pass membrane protein</topology>
    </subcellularLocation>
</comment>
<comment type="similarity">
    <text evidence="3">Belongs to the Casparian strip membrane proteins (CASP) family.</text>
</comment>
<proteinExistence type="evidence at transcript level"/>
<organism>
    <name type="scientific">Selaginella moellendorffii</name>
    <name type="common">Spikemoss</name>
    <dbReference type="NCBI Taxonomy" id="88036"/>
    <lineage>
        <taxon>Eukaryota</taxon>
        <taxon>Viridiplantae</taxon>
        <taxon>Streptophyta</taxon>
        <taxon>Embryophyta</taxon>
        <taxon>Tracheophyta</taxon>
        <taxon>Lycopodiopsida</taxon>
        <taxon>Selaginellales</taxon>
        <taxon>Selaginellaceae</taxon>
        <taxon>Selaginella</taxon>
    </lineage>
</organism>